<comment type="function">
    <text evidence="1">Catalyzes the formation of 5-methyl-uridine at position 1939 (m5U1939) in 23S rRNA.</text>
</comment>
<comment type="catalytic activity">
    <reaction evidence="1">
        <text>uridine(1939) in 23S rRNA + S-adenosyl-L-methionine = 5-methyluridine(1939) in 23S rRNA + S-adenosyl-L-homocysteine + H(+)</text>
        <dbReference type="Rhea" id="RHEA:42908"/>
        <dbReference type="Rhea" id="RHEA-COMP:10278"/>
        <dbReference type="Rhea" id="RHEA-COMP:10279"/>
        <dbReference type="ChEBI" id="CHEBI:15378"/>
        <dbReference type="ChEBI" id="CHEBI:57856"/>
        <dbReference type="ChEBI" id="CHEBI:59789"/>
        <dbReference type="ChEBI" id="CHEBI:65315"/>
        <dbReference type="ChEBI" id="CHEBI:74447"/>
        <dbReference type="EC" id="2.1.1.190"/>
    </reaction>
</comment>
<comment type="similarity">
    <text evidence="1">Belongs to the class I-like SAM-binding methyltransferase superfamily. RNA M5U methyltransferase family. RlmD subfamily.</text>
</comment>
<comment type="sequence caution" evidence="3">
    <conflict type="erroneous initiation">
        <sequence resource="EMBL-CDS" id="ABB08712"/>
    </conflict>
</comment>
<sequence length="465" mass="51111">MSEAVPTSARKSRNAPVAPGPAPVLEIESLDMEARGVGRTITEDGEPGKVIFVEGALPGERVTYSSFRRKPSYEQATVVDILRPSVMRTKPKCAFFGTCGGCSMQHLDMRAQVAVKQRVLEDNLWHLAKLRAETMFAPIHGPSWGYRYRARLTVRNVAKKGGVLVGFHEKKSSYVADMTSCEVLPPHVSAMLVPLRRLVEGLSIRDRMPQIELAVGSEVTALVLRVLEPINADDEALLRAFADEHKVQFWLQPKGPDTVAPFYPLDVSLDYTLPEFGIRMPFKPTDFTQVNHQINRVLVGRALRLLAPSRDDRVLDLFCGIGNFTLPLARLSREVMGIEGSDTLTTRALANARENGVDGHTTFACRNLFEVTGDDIRALGAFDKFLIDPPREGALAVSKALAEIAQSGEGPLPKRIVYVSCNPSTLARDAGLLVHEAGYRLKGAGVVNMFPNTSHVESIALFERD</sequence>
<protein>
    <recommendedName>
        <fullName evidence="1">23S rRNA (uracil(1939)-C(5))-methyltransferase RlmD</fullName>
        <ecNumber evidence="1">2.1.1.190</ecNumber>
    </recommendedName>
    <alternativeName>
        <fullName evidence="1">23S rRNA(m5U1939)-methyltransferase</fullName>
    </alternativeName>
</protein>
<proteinExistence type="inferred from homology"/>
<organism>
    <name type="scientific">Burkholderia lata (strain ATCC 17760 / DSM 23089 / LMG 22485 / NCIMB 9086 / R18194 / 383)</name>
    <dbReference type="NCBI Taxonomy" id="482957"/>
    <lineage>
        <taxon>Bacteria</taxon>
        <taxon>Pseudomonadati</taxon>
        <taxon>Pseudomonadota</taxon>
        <taxon>Betaproteobacteria</taxon>
        <taxon>Burkholderiales</taxon>
        <taxon>Burkholderiaceae</taxon>
        <taxon>Burkholderia</taxon>
        <taxon>Burkholderia cepacia complex</taxon>
    </lineage>
</organism>
<keyword id="KW-0004">4Fe-4S</keyword>
<keyword id="KW-0408">Iron</keyword>
<keyword id="KW-0411">Iron-sulfur</keyword>
<keyword id="KW-0479">Metal-binding</keyword>
<keyword id="KW-0489">Methyltransferase</keyword>
<keyword id="KW-0698">rRNA processing</keyword>
<keyword id="KW-0949">S-adenosyl-L-methionine</keyword>
<keyword id="KW-0808">Transferase</keyword>
<feature type="chain" id="PRO_0000282034" description="23S rRNA (uracil(1939)-C(5))-methyltransferase RlmD">
    <location>
        <begin position="1"/>
        <end position="465"/>
    </location>
</feature>
<feature type="domain" description="TRAM" evidence="1">
    <location>
        <begin position="16"/>
        <end position="80"/>
    </location>
</feature>
<feature type="region of interest" description="Disordered" evidence="2">
    <location>
        <begin position="1"/>
        <end position="22"/>
    </location>
</feature>
<feature type="active site" description="Nucleophile" evidence="1">
    <location>
        <position position="421"/>
    </location>
</feature>
<feature type="binding site" evidence="1">
    <location>
        <position position="93"/>
    </location>
    <ligand>
        <name>[4Fe-4S] cluster</name>
        <dbReference type="ChEBI" id="CHEBI:49883"/>
    </ligand>
</feature>
<feature type="binding site" evidence="1">
    <location>
        <position position="99"/>
    </location>
    <ligand>
        <name>[4Fe-4S] cluster</name>
        <dbReference type="ChEBI" id="CHEBI:49883"/>
    </ligand>
</feature>
<feature type="binding site" evidence="1">
    <location>
        <position position="102"/>
    </location>
    <ligand>
        <name>[4Fe-4S] cluster</name>
        <dbReference type="ChEBI" id="CHEBI:49883"/>
    </ligand>
</feature>
<feature type="binding site" evidence="1">
    <location>
        <position position="181"/>
    </location>
    <ligand>
        <name>[4Fe-4S] cluster</name>
        <dbReference type="ChEBI" id="CHEBI:49883"/>
    </ligand>
</feature>
<feature type="binding site" evidence="1">
    <location>
        <position position="289"/>
    </location>
    <ligand>
        <name>S-adenosyl-L-methionine</name>
        <dbReference type="ChEBI" id="CHEBI:59789"/>
    </ligand>
</feature>
<feature type="binding site" evidence="1">
    <location>
        <position position="318"/>
    </location>
    <ligand>
        <name>S-adenosyl-L-methionine</name>
        <dbReference type="ChEBI" id="CHEBI:59789"/>
    </ligand>
</feature>
<feature type="binding site" evidence="1">
    <location>
        <position position="323"/>
    </location>
    <ligand>
        <name>S-adenosyl-L-methionine</name>
        <dbReference type="ChEBI" id="CHEBI:59789"/>
    </ligand>
</feature>
<feature type="binding site" evidence="1">
    <location>
        <position position="339"/>
    </location>
    <ligand>
        <name>S-adenosyl-L-methionine</name>
        <dbReference type="ChEBI" id="CHEBI:59789"/>
    </ligand>
</feature>
<feature type="binding site" evidence="1">
    <location>
        <position position="367"/>
    </location>
    <ligand>
        <name>S-adenosyl-L-methionine</name>
        <dbReference type="ChEBI" id="CHEBI:59789"/>
    </ligand>
</feature>
<feature type="binding site" evidence="1">
    <location>
        <position position="388"/>
    </location>
    <ligand>
        <name>S-adenosyl-L-methionine</name>
        <dbReference type="ChEBI" id="CHEBI:59789"/>
    </ligand>
</feature>
<name>RLMD_BURL3</name>
<gene>
    <name evidence="1" type="primary">rlmD</name>
    <name type="synonym">rumA</name>
    <name type="ordered locus">Bcep18194_A5118</name>
</gene>
<accession>Q39FQ4</accession>
<reference key="1">
    <citation type="submission" date="2005-10" db="EMBL/GenBank/DDBJ databases">
        <title>Complete sequence of chromosome 1 of Burkholderia sp. 383.</title>
        <authorList>
            <consortium name="US DOE Joint Genome Institute"/>
            <person name="Copeland A."/>
            <person name="Lucas S."/>
            <person name="Lapidus A."/>
            <person name="Barry K."/>
            <person name="Detter J.C."/>
            <person name="Glavina T."/>
            <person name="Hammon N."/>
            <person name="Israni S."/>
            <person name="Pitluck S."/>
            <person name="Chain P."/>
            <person name="Malfatti S."/>
            <person name="Shin M."/>
            <person name="Vergez L."/>
            <person name="Schmutz J."/>
            <person name="Larimer F."/>
            <person name="Land M."/>
            <person name="Kyrpides N."/>
            <person name="Lykidis A."/>
            <person name="Richardson P."/>
        </authorList>
    </citation>
    <scope>NUCLEOTIDE SEQUENCE [LARGE SCALE GENOMIC DNA]</scope>
    <source>
        <strain>ATCC 17760 / DSM 23089 / LMG 22485 / NCIMB 9086 / R18194 / 383</strain>
    </source>
</reference>
<dbReference type="EC" id="2.1.1.190" evidence="1"/>
<dbReference type="EMBL" id="CP000151">
    <property type="protein sequence ID" value="ABB08712.1"/>
    <property type="status" value="ALT_INIT"/>
    <property type="molecule type" value="Genomic_DNA"/>
</dbReference>
<dbReference type="RefSeq" id="WP_011352267.1">
    <property type="nucleotide sequence ID" value="NC_007510.1"/>
</dbReference>
<dbReference type="SMR" id="Q39FQ4"/>
<dbReference type="GeneID" id="45094994"/>
<dbReference type="KEGG" id="bur:Bcep18194_A5118"/>
<dbReference type="PATRIC" id="fig|482957.22.peg.2056"/>
<dbReference type="HOGENOM" id="CLU_014689_8_2_4"/>
<dbReference type="Proteomes" id="UP000002705">
    <property type="component" value="Chromosome 1"/>
</dbReference>
<dbReference type="GO" id="GO:0051539">
    <property type="term" value="F:4 iron, 4 sulfur cluster binding"/>
    <property type="evidence" value="ECO:0007669"/>
    <property type="project" value="UniProtKB-KW"/>
</dbReference>
<dbReference type="GO" id="GO:0005506">
    <property type="term" value="F:iron ion binding"/>
    <property type="evidence" value="ECO:0007669"/>
    <property type="project" value="UniProtKB-UniRule"/>
</dbReference>
<dbReference type="GO" id="GO:0003723">
    <property type="term" value="F:RNA binding"/>
    <property type="evidence" value="ECO:0007669"/>
    <property type="project" value="InterPro"/>
</dbReference>
<dbReference type="GO" id="GO:0070041">
    <property type="term" value="F:rRNA (uridine-C5-)-methyltransferase activity"/>
    <property type="evidence" value="ECO:0007669"/>
    <property type="project" value="UniProtKB-UniRule"/>
</dbReference>
<dbReference type="GO" id="GO:0070475">
    <property type="term" value="P:rRNA base methylation"/>
    <property type="evidence" value="ECO:0007669"/>
    <property type="project" value="TreeGrafter"/>
</dbReference>
<dbReference type="CDD" id="cd02440">
    <property type="entry name" value="AdoMet_MTases"/>
    <property type="match status" value="1"/>
</dbReference>
<dbReference type="Gene3D" id="2.40.50.1070">
    <property type="match status" value="1"/>
</dbReference>
<dbReference type="Gene3D" id="2.40.50.140">
    <property type="entry name" value="Nucleic acid-binding proteins"/>
    <property type="match status" value="1"/>
</dbReference>
<dbReference type="Gene3D" id="3.40.50.150">
    <property type="entry name" value="Vaccinia Virus protein VP39"/>
    <property type="match status" value="1"/>
</dbReference>
<dbReference type="HAMAP" id="MF_01010">
    <property type="entry name" value="23SrRNA_methyltr_RlmD"/>
    <property type="match status" value="1"/>
</dbReference>
<dbReference type="InterPro" id="IPR001566">
    <property type="entry name" value="23S_rRNA_MeTrfase_RlmD"/>
</dbReference>
<dbReference type="InterPro" id="IPR012340">
    <property type="entry name" value="NA-bd_OB-fold"/>
</dbReference>
<dbReference type="InterPro" id="IPR029063">
    <property type="entry name" value="SAM-dependent_MTases_sf"/>
</dbReference>
<dbReference type="InterPro" id="IPR002792">
    <property type="entry name" value="TRAM_dom"/>
</dbReference>
<dbReference type="InterPro" id="IPR010280">
    <property type="entry name" value="U5_MeTrfase_fam"/>
</dbReference>
<dbReference type="NCBIfam" id="NF009639">
    <property type="entry name" value="PRK13168.1"/>
    <property type="match status" value="1"/>
</dbReference>
<dbReference type="PANTHER" id="PTHR11061:SF49">
    <property type="entry name" value="23S RRNA (URACIL(1939)-C(5))-METHYLTRANSFERASE RLMD"/>
    <property type="match status" value="1"/>
</dbReference>
<dbReference type="PANTHER" id="PTHR11061">
    <property type="entry name" value="RNA M5U METHYLTRANSFERASE"/>
    <property type="match status" value="1"/>
</dbReference>
<dbReference type="Pfam" id="PF05958">
    <property type="entry name" value="tRNA_U5-meth_tr"/>
    <property type="match status" value="1"/>
</dbReference>
<dbReference type="SUPFAM" id="SSF50249">
    <property type="entry name" value="Nucleic acid-binding proteins"/>
    <property type="match status" value="1"/>
</dbReference>
<dbReference type="SUPFAM" id="SSF53335">
    <property type="entry name" value="S-adenosyl-L-methionine-dependent methyltransferases"/>
    <property type="match status" value="1"/>
</dbReference>
<dbReference type="PROSITE" id="PS51687">
    <property type="entry name" value="SAM_MT_RNA_M5U"/>
    <property type="match status" value="1"/>
</dbReference>
<dbReference type="PROSITE" id="PS50926">
    <property type="entry name" value="TRAM"/>
    <property type="match status" value="1"/>
</dbReference>
<evidence type="ECO:0000255" key="1">
    <source>
        <dbReference type="HAMAP-Rule" id="MF_01010"/>
    </source>
</evidence>
<evidence type="ECO:0000256" key="2">
    <source>
        <dbReference type="SAM" id="MobiDB-lite"/>
    </source>
</evidence>
<evidence type="ECO:0000305" key="3"/>